<reference key="1">
    <citation type="journal article" date="2007" name="Nature">
        <title>Evolution of genes and genomes on the Drosophila phylogeny.</title>
        <authorList>
            <consortium name="Drosophila 12 genomes consortium"/>
        </authorList>
    </citation>
    <scope>NUCLEOTIDE SEQUENCE [LARGE SCALE GENOMIC DNA]</scope>
    <source>
        <strain>Tucson 14021-0224.01</strain>
    </source>
</reference>
<keyword id="KW-0963">Cytoplasm</keyword>
<keyword id="KW-0217">Developmental protein</keyword>
<keyword id="KW-0221">Differentiation</keyword>
<keyword id="KW-0539">Nucleus</keyword>
<keyword id="KW-0896">Oogenesis</keyword>
<keyword id="KW-0677">Repeat</keyword>
<keyword id="KW-0744">Spermatogenesis</keyword>
<keyword id="KW-0819">tRNA processing</keyword>
<keyword id="KW-0853">WD repeat</keyword>
<proteinExistence type="inferred from homology"/>
<sequence length="416" mass="46082">MCTTISFAEPEIVLGHGRRVLFVNPDDLQIFKEIELPPDLGLKCHETQSQESCPATATSTTAGKEPGGKEQQLAKQPEEGGTSASGSVATSTSVQNVAYSPDGQLLAVTTSGGQKALLLYRSRPENARLLSARPLARAASAVRFCSDSSSVLVTDKTGDCYQYDCVEVEAPPRLLLGHLSVVYDILWSEDQQHIITCDRDDKIRVTNYPATFDIHSYCLGHREFVSGLALLTEQHIASASGDKTLRVWNYIQGKELLQHELPAPAVRLLVRQLEPEKVFQAAVLFYEHVDALGLYRLERSSDDTWSVTATQLVCAEAGSWSISNFTLTSDRIYITGAENERLSLRVYDIATGQPTTNGVPEGWLKMVLDGLGANEEGAPPFIPEDLSVWFKKRFDNVTDYLERKKRRIEEQKQQKC</sequence>
<protein>
    <recommendedName>
        <fullName evidence="2">tRNA (guanine-N(7)-)-methyltransferase non-catalytic subunit wuho</fullName>
    </recommendedName>
</protein>
<gene>
    <name evidence="2" type="primary">wuho</name>
    <name type="ORF">GG19581</name>
</gene>
<name>WUHO_DROER</name>
<dbReference type="EMBL" id="CH954180">
    <property type="protein sequence ID" value="EDV47358.1"/>
    <property type="molecule type" value="Genomic_DNA"/>
</dbReference>
<dbReference type="SMR" id="B3NXQ7"/>
<dbReference type="EnsemblMetazoa" id="FBtr0139635">
    <property type="protein sequence ID" value="FBpp0138127"/>
    <property type="gene ID" value="FBgn0111783"/>
</dbReference>
<dbReference type="EnsemblMetazoa" id="XM_001978395.3">
    <property type="protein sequence ID" value="XP_001978431.1"/>
    <property type="gene ID" value="LOC6551287"/>
</dbReference>
<dbReference type="GeneID" id="6551287"/>
<dbReference type="KEGG" id="der:6551287"/>
<dbReference type="CTD" id="31566"/>
<dbReference type="eggNOG" id="KOG3914">
    <property type="taxonomic scope" value="Eukaryota"/>
</dbReference>
<dbReference type="HOGENOM" id="CLU_054270_0_0_1"/>
<dbReference type="OMA" id="SVWFKKR"/>
<dbReference type="OrthoDB" id="371245at2759"/>
<dbReference type="PhylomeDB" id="B3NXQ7"/>
<dbReference type="UniPathway" id="UPA00989"/>
<dbReference type="Proteomes" id="UP000008711">
    <property type="component" value="Unassembled WGS sequence"/>
</dbReference>
<dbReference type="GO" id="GO:0005829">
    <property type="term" value="C:cytosol"/>
    <property type="evidence" value="ECO:0007669"/>
    <property type="project" value="TreeGrafter"/>
</dbReference>
<dbReference type="GO" id="GO:0001674">
    <property type="term" value="C:female germ cell nucleus"/>
    <property type="evidence" value="ECO:0000250"/>
    <property type="project" value="UniProtKB"/>
</dbReference>
<dbReference type="GO" id="GO:0001673">
    <property type="term" value="C:male germ cell nucleus"/>
    <property type="evidence" value="ECO:0000250"/>
    <property type="project" value="UniProtKB"/>
</dbReference>
<dbReference type="GO" id="GO:0005634">
    <property type="term" value="C:nucleus"/>
    <property type="evidence" value="ECO:0000250"/>
    <property type="project" value="UniProtKB"/>
</dbReference>
<dbReference type="GO" id="GO:0106143">
    <property type="term" value="C:tRNA (m7G46) methyltransferase complex"/>
    <property type="evidence" value="ECO:0007669"/>
    <property type="project" value="EnsemblMetazoa"/>
</dbReference>
<dbReference type="GO" id="GO:0048477">
    <property type="term" value="P:oogenesis"/>
    <property type="evidence" value="ECO:0000250"/>
    <property type="project" value="UniProtKB"/>
</dbReference>
<dbReference type="GO" id="GO:0007283">
    <property type="term" value="P:spermatogenesis"/>
    <property type="evidence" value="ECO:0000250"/>
    <property type="project" value="UniProtKB"/>
</dbReference>
<dbReference type="GO" id="GO:0106004">
    <property type="term" value="P:tRNA (guanine-N7)-methylation"/>
    <property type="evidence" value="ECO:0007669"/>
    <property type="project" value="UniProtKB-UniRule"/>
</dbReference>
<dbReference type="FunFam" id="2.130.10.10:FF:002224">
    <property type="entry name" value="tRNA (guanine-N(7)-)-methyltransferase non-catalytic subunit wuho"/>
    <property type="match status" value="1"/>
</dbReference>
<dbReference type="Gene3D" id="2.130.10.10">
    <property type="entry name" value="YVTN repeat-like/Quinoprotein amine dehydrogenase"/>
    <property type="match status" value="1"/>
</dbReference>
<dbReference type="HAMAP" id="MF_03056">
    <property type="entry name" value="TRM82"/>
    <property type="match status" value="1"/>
</dbReference>
<dbReference type="InterPro" id="IPR028884">
    <property type="entry name" value="Trm82"/>
</dbReference>
<dbReference type="InterPro" id="IPR015943">
    <property type="entry name" value="WD40/YVTN_repeat-like_dom_sf"/>
</dbReference>
<dbReference type="InterPro" id="IPR036322">
    <property type="entry name" value="WD40_repeat_dom_sf"/>
</dbReference>
<dbReference type="InterPro" id="IPR001680">
    <property type="entry name" value="WD40_rpt"/>
</dbReference>
<dbReference type="PANTHER" id="PTHR16288:SF0">
    <property type="entry name" value="TRNA (GUANINE-N(7)-)-METHYLTRANSFERASE NON-CATALYTIC SUBUNIT WDR4"/>
    <property type="match status" value="1"/>
</dbReference>
<dbReference type="PANTHER" id="PTHR16288">
    <property type="entry name" value="WD40 REPEAT PROTEIN 4"/>
    <property type="match status" value="1"/>
</dbReference>
<dbReference type="Pfam" id="PF00400">
    <property type="entry name" value="WD40"/>
    <property type="match status" value="2"/>
</dbReference>
<dbReference type="SMART" id="SM00320">
    <property type="entry name" value="WD40"/>
    <property type="match status" value="3"/>
</dbReference>
<dbReference type="SUPFAM" id="SSF50978">
    <property type="entry name" value="WD40 repeat-like"/>
    <property type="match status" value="1"/>
</dbReference>
<dbReference type="PROSITE" id="PS50082">
    <property type="entry name" value="WD_REPEATS_2"/>
    <property type="match status" value="1"/>
</dbReference>
<dbReference type="PROSITE" id="PS50294">
    <property type="entry name" value="WD_REPEATS_REGION"/>
    <property type="match status" value="1"/>
</dbReference>
<evidence type="ECO:0000250" key="1">
    <source>
        <dbReference type="UniProtKB" id="Q9W415"/>
    </source>
</evidence>
<evidence type="ECO:0000255" key="2">
    <source>
        <dbReference type="HAMAP-Rule" id="MF_03056"/>
    </source>
</evidence>
<evidence type="ECO:0000256" key="3">
    <source>
        <dbReference type="SAM" id="MobiDB-lite"/>
    </source>
</evidence>
<feature type="chain" id="PRO_0000370543" description="tRNA (guanine-N(7)-)-methyltransferase non-catalytic subunit wuho">
    <location>
        <begin position="1"/>
        <end position="416"/>
    </location>
</feature>
<feature type="repeat" description="WD 1">
    <location>
        <begin position="89"/>
        <end position="130"/>
    </location>
</feature>
<feature type="repeat" description="WD 2">
    <location>
        <begin position="177"/>
        <end position="216"/>
    </location>
</feature>
<feature type="repeat" description="WD 3">
    <location>
        <begin position="220"/>
        <end position="258"/>
    </location>
</feature>
<feature type="repeat" description="WD 4">
    <location>
        <begin position="317"/>
        <end position="357"/>
    </location>
</feature>
<feature type="region of interest" description="Disordered" evidence="3">
    <location>
        <begin position="47"/>
        <end position="88"/>
    </location>
</feature>
<feature type="compositionally biased region" description="Polar residues" evidence="3">
    <location>
        <begin position="49"/>
        <end position="62"/>
    </location>
</feature>
<organism>
    <name type="scientific">Drosophila erecta</name>
    <name type="common">Fruit fly</name>
    <dbReference type="NCBI Taxonomy" id="7220"/>
    <lineage>
        <taxon>Eukaryota</taxon>
        <taxon>Metazoa</taxon>
        <taxon>Ecdysozoa</taxon>
        <taxon>Arthropoda</taxon>
        <taxon>Hexapoda</taxon>
        <taxon>Insecta</taxon>
        <taxon>Pterygota</taxon>
        <taxon>Neoptera</taxon>
        <taxon>Endopterygota</taxon>
        <taxon>Diptera</taxon>
        <taxon>Brachycera</taxon>
        <taxon>Muscomorpha</taxon>
        <taxon>Ephydroidea</taxon>
        <taxon>Drosophilidae</taxon>
        <taxon>Drosophila</taxon>
        <taxon>Sophophora</taxon>
    </lineage>
</organism>
<accession>B3NXQ7</accession>
<comment type="function">
    <text evidence="1 2">Required for the Mettl1-dependent formation of N(7)-methylguanine at position 46 (m7G46) in tRNA (By similarity). In the Mettl1-wuho methyltransferase complex, it is required to stabilize and induce conformational changes of the catalytic subunit (By similarity). Required for binding of nanos mRNA and repression of translation by the mei-P26-bgcn-bam-sxl complex. May cooperate with mei-P26 and nanos to derepress the BMP signaling pathway. May cooperate with mei-P26 to suppress expression of a subset of microRNAs. May cooperate with mei-P26 to regulate bam expression levels in germline cells during gametogenesis. Required to promote mitosis to meiosis transition during gametogenesis. May regulate germline cell division in part by regulating ribosome biogenesis (By similarity).</text>
</comment>
<comment type="pathway">
    <text evidence="2">tRNA modification; N(7)-methylguanine-tRNA biosynthesis.</text>
</comment>
<comment type="subunit">
    <text evidence="1 2">Forms a heterodimer with the catalytic subunit Mettl1 (By similarity). Interacts with mei-P26 and weakly interacts with bgcn; required for the function or formation of the mei-P26-bgcn-bam-sxl complex. Interacts with nanos; may be involved in mei-P26-dependent derepression of the BMP signaling pathway. Interacts with Myc; the interaction may be mediated by mei-P26 and may be involved in the regulation of ribosome biogenesis (By similarity).</text>
</comment>
<comment type="subcellular location">
    <subcellularLocation>
        <location evidence="1 2">Nucleus</location>
    </subcellularLocation>
    <subcellularLocation>
        <location evidence="1">Cytoplasm</location>
    </subcellularLocation>
    <text evidence="1">Localized to the nuclei of nurse cells, follicle cells and oocytes at early stages, from germarium to stage 4 egg chambers. Also present in the nuclei of spermatocytes and in the apical cells of the testes. In the cytoplasm of all germline and somatic cells of the ovary.</text>
</comment>
<comment type="tissue specificity">
    <text evidence="1">In testis, it is present at high level in hub cells, a niche for germline stem cells of testis. Ubiquitously expressed in all testicular cells throughout spermatogenesis. Ubiquitously expressed in all germline and somatic cells of the ovary.</text>
</comment>
<comment type="miscellaneous">
    <text evidence="1">Wuho means 'no progeny' in Chinese.</text>
</comment>
<comment type="similarity">
    <text evidence="2">Belongs to the WD repeat TRM82 family.</text>
</comment>